<name>MYBP_MAIZE</name>
<feature type="chain" id="PRO_0000197066" description="Myb-related protein P">
    <location>
        <begin position="1"/>
        <end position="399"/>
    </location>
</feature>
<feature type="domain" description="HTH myb-type 1" evidence="1">
    <location>
        <begin position="9"/>
        <end position="61"/>
    </location>
</feature>
<feature type="domain" description="HTH myb-type 2" evidence="1">
    <location>
        <begin position="62"/>
        <end position="116"/>
    </location>
</feature>
<feature type="DNA-binding region" description="H-T-H motif" evidence="1">
    <location>
        <begin position="37"/>
        <end position="61"/>
    </location>
</feature>
<feature type="DNA-binding region" description="H-T-H motif" evidence="1">
    <location>
        <begin position="89"/>
        <end position="112"/>
    </location>
</feature>
<feature type="region of interest" description="Disordered" evidence="2">
    <location>
        <begin position="138"/>
        <end position="222"/>
    </location>
</feature>
<feature type="region of interest" description="Disordered" evidence="2">
    <location>
        <begin position="242"/>
        <end position="262"/>
    </location>
</feature>
<feature type="compositionally biased region" description="Low complexity" evidence="2">
    <location>
        <begin position="170"/>
        <end position="184"/>
    </location>
</feature>
<feature type="compositionally biased region" description="Low complexity" evidence="2">
    <location>
        <begin position="191"/>
        <end position="206"/>
    </location>
</feature>
<feature type="splice variant" id="VSP_003301" description="In isoform Short." evidence="3">
    <original>WSLIASHLPGRTDNEIKNYWNSHLSRQIHTYRRKYTAGPDDTAIAIDMSKLQSADRRRGGRTPG</original>
    <variation>RHLMIEADYSPPSTVRCLPRGALAYLTLPRQSPFQTARITYDRIGSALLRSVRFCFRCVPSRW</variation>
    <location>
        <begin position="89"/>
        <end position="152"/>
    </location>
</feature>
<feature type="splice variant" id="VSP_003302" description="In isoform Short." evidence="3">
    <location>
        <begin position="153"/>
        <end position="399"/>
    </location>
</feature>
<gene>
    <name type="primary">P</name>
</gene>
<evidence type="ECO:0000255" key="1">
    <source>
        <dbReference type="PROSITE-ProRule" id="PRU00625"/>
    </source>
</evidence>
<evidence type="ECO:0000256" key="2">
    <source>
        <dbReference type="SAM" id="MobiDB-lite"/>
    </source>
</evidence>
<evidence type="ECO:0000305" key="3"/>
<keyword id="KW-0025">Alternative splicing</keyword>
<keyword id="KW-0238">DNA-binding</keyword>
<keyword id="KW-0539">Nucleus</keyword>
<keyword id="KW-1185">Reference proteome</keyword>
<keyword id="KW-0677">Repeat</keyword>
<keyword id="KW-0804">Transcription</keyword>
<keyword id="KW-0805">Transcription regulation</keyword>
<proteinExistence type="evidence at transcript level"/>
<comment type="function">
    <text>Transcription factor postulated to regulate the biosynthetic pathway of a flavonoid-derived pigment in certain floral tissues.</text>
</comment>
<comment type="subcellular location">
    <subcellularLocation>
        <location evidence="3">Nucleus</location>
    </subcellularLocation>
</comment>
<comment type="alternative products">
    <event type="alternative splicing"/>
    <isoform>
        <id>P27898-1</id>
        <name>Long</name>
        <sequence type="displayed"/>
    </isoform>
    <isoform>
        <id>P27898-2</id>
        <name>Short</name>
        <sequence type="described" ref="VSP_003301 VSP_003302"/>
    </isoform>
</comment>
<organism>
    <name type="scientific">Zea mays</name>
    <name type="common">Maize</name>
    <dbReference type="NCBI Taxonomy" id="4577"/>
    <lineage>
        <taxon>Eukaryota</taxon>
        <taxon>Viridiplantae</taxon>
        <taxon>Streptophyta</taxon>
        <taxon>Embryophyta</taxon>
        <taxon>Tracheophyta</taxon>
        <taxon>Spermatophyta</taxon>
        <taxon>Magnoliopsida</taxon>
        <taxon>Liliopsida</taxon>
        <taxon>Poales</taxon>
        <taxon>Poaceae</taxon>
        <taxon>PACMAD clade</taxon>
        <taxon>Panicoideae</taxon>
        <taxon>Andropogonodae</taxon>
        <taxon>Andropogoneae</taxon>
        <taxon>Tripsacinae</taxon>
        <taxon>Zea</taxon>
    </lineage>
</organism>
<dbReference type="EMBL" id="M73028">
    <property type="protein sequence ID" value="AAA33500.1"/>
    <property type="molecule type" value="mRNA"/>
</dbReference>
<dbReference type="EMBL" id="M73029">
    <property type="protein sequence ID" value="AAA33501.1"/>
    <property type="molecule type" value="mRNA"/>
</dbReference>
<dbReference type="EMBL" id="Z11879">
    <property type="protein sequence ID" value="CAA77939.1"/>
    <property type="molecule type" value="Genomic_DNA"/>
</dbReference>
<dbReference type="PIR" id="A39697">
    <property type="entry name" value="A39697"/>
</dbReference>
<dbReference type="PIR" id="B39697">
    <property type="entry name" value="B39697"/>
</dbReference>
<dbReference type="SMR" id="P27898"/>
<dbReference type="STRING" id="4577.P27898"/>
<dbReference type="PaxDb" id="4577-GRMZM2G084799_P01"/>
<dbReference type="MaizeGDB" id="69180"/>
<dbReference type="MaizeGDB" id="69181"/>
<dbReference type="eggNOG" id="KOG0048">
    <property type="taxonomic scope" value="Eukaryota"/>
</dbReference>
<dbReference type="InParanoid" id="P27898"/>
<dbReference type="Proteomes" id="UP000007305">
    <property type="component" value="Unplaced"/>
</dbReference>
<dbReference type="ExpressionAtlas" id="P27898">
    <property type="expression patterns" value="baseline"/>
</dbReference>
<dbReference type="GO" id="GO:0005634">
    <property type="term" value="C:nucleus"/>
    <property type="evidence" value="ECO:0000318"/>
    <property type="project" value="GO_Central"/>
</dbReference>
<dbReference type="GO" id="GO:0000987">
    <property type="term" value="F:cis-regulatory region sequence-specific DNA binding"/>
    <property type="evidence" value="ECO:0000318"/>
    <property type="project" value="GO_Central"/>
</dbReference>
<dbReference type="GO" id="GO:0006355">
    <property type="term" value="P:regulation of DNA-templated transcription"/>
    <property type="evidence" value="ECO:0000318"/>
    <property type="project" value="GO_Central"/>
</dbReference>
<dbReference type="CDD" id="cd00167">
    <property type="entry name" value="SANT"/>
    <property type="match status" value="2"/>
</dbReference>
<dbReference type="FunFam" id="1.10.10.60:FF:000121">
    <property type="entry name" value="Myb transcription factor"/>
    <property type="match status" value="1"/>
</dbReference>
<dbReference type="FunFam" id="1.10.10.60:FF:000231">
    <property type="entry name" value="Myb transcription factor"/>
    <property type="match status" value="1"/>
</dbReference>
<dbReference type="Gene3D" id="1.10.10.60">
    <property type="entry name" value="Homeodomain-like"/>
    <property type="match status" value="2"/>
</dbReference>
<dbReference type="InterPro" id="IPR009057">
    <property type="entry name" value="Homeodomain-like_sf"/>
</dbReference>
<dbReference type="InterPro" id="IPR010588">
    <property type="entry name" value="Myb-rel_proteinP/Y1_C"/>
</dbReference>
<dbReference type="InterPro" id="IPR017930">
    <property type="entry name" value="Myb_dom"/>
</dbReference>
<dbReference type="InterPro" id="IPR015495">
    <property type="entry name" value="Myb_TF_plants"/>
</dbReference>
<dbReference type="InterPro" id="IPR001005">
    <property type="entry name" value="SANT/Myb"/>
</dbReference>
<dbReference type="PANTHER" id="PTHR47999:SF6">
    <property type="entry name" value="MYB-RELATED PROTEIN P"/>
    <property type="match status" value="1"/>
</dbReference>
<dbReference type="PANTHER" id="PTHR47999">
    <property type="entry name" value="TRANSCRIPTION FACTOR MYB8-RELATED-RELATED"/>
    <property type="match status" value="1"/>
</dbReference>
<dbReference type="Pfam" id="PF00249">
    <property type="entry name" value="Myb_DNA-binding"/>
    <property type="match status" value="2"/>
</dbReference>
<dbReference type="Pfam" id="PF06640">
    <property type="entry name" value="P_C"/>
    <property type="match status" value="1"/>
</dbReference>
<dbReference type="SMART" id="SM00717">
    <property type="entry name" value="SANT"/>
    <property type="match status" value="2"/>
</dbReference>
<dbReference type="SUPFAM" id="SSF46689">
    <property type="entry name" value="Homeodomain-like"/>
    <property type="match status" value="1"/>
</dbReference>
<dbReference type="PROSITE" id="PS51294">
    <property type="entry name" value="HTH_MYB"/>
    <property type="match status" value="2"/>
</dbReference>
<reference key="1">
    <citation type="journal article" date="1991" name="Proc. Natl. Acad. Sci. U.S.A.">
        <title>Alternatively spliced products of the maize P gene encode proteins with homology to the DNA-binding domain of myb-like transcription factors.</title>
        <authorList>
            <person name="Grotewold E."/>
            <person name="Athma P."/>
            <person name="Peterson T."/>
        </authorList>
    </citation>
    <scope>NUCLEOTIDE SEQUENCE [MRNA]</scope>
</reference>
<reference key="2">
    <citation type="journal article" date="1992" name="Genetics">
        <title>Insertional mutagenesis of the maize P gene by intragenic transposition of Ac.</title>
        <authorList>
            <person name="Athma P."/>
            <person name="Grotewold E."/>
            <person name="Peterson T."/>
        </authorList>
    </citation>
    <scope>NUCLEOTIDE SEQUENCE [GENOMIC DNA]</scope>
</reference>
<sequence length="399" mass="43756">MGRTPCCEKVGLKRGRWTAEEDQLLANYIAEHGEGSWRSLPKNAGLLRCGKSCRLRWINYLRADVKRGNISKEEEDIIIKLHATLGNRWSLIASHLPGRTDNEIKNYWNSHLSRQIHTYRRKYTAGPDDTAIAIDMSKLQSADRRRGGRTPGRPPKASASRTKQADADQPGGEAKGPAAAASSPRHSDVVNPGPNQPNSSSGSTGTAEEEGPSSEDASGPWVLEPIELGDLVWGEADSEMDALMPIGPGGTTRLPSKGLARSAARPRWTTCSTWTGMASRPICGAGRSRTSTARSCGRPPSRWKLLLLLLLRRRPAPRTIASWRRSRLGSCPTRSDGSGHRTDQTDQIIGSRVLARSLPSRGSWFRWPNNWEKNSTARAVKPPPCAPDVDACRVELLRI</sequence>
<protein>
    <recommendedName>
        <fullName>Myb-related protein P</fullName>
    </recommendedName>
</protein>
<accession>P27898</accession>
<accession>P27899</accession>